<comment type="function">
    <text evidence="3">Has antimicrobial activity against Gram-negative bacterium E.coli ATCC 8739 (MIC=50 ug) and against Gram positive bacteria S.aureus ATCC 6538 (MIC=25 ug). Has no activity against methicillin-resistant S.aureus ATCC 43300, B.subtilis ATCC 6633 and against fungus C.albicans ATCC 90028.</text>
</comment>
<comment type="subcellular location">
    <subcellularLocation>
        <location evidence="5">Secreted</location>
    </subcellularLocation>
</comment>
<comment type="tissue specificity">
    <text evidence="5">Expressed by the skin glands.</text>
</comment>
<comment type="mass spectrometry"/>
<comment type="similarity">
    <text evidence="2">Belongs to the frog skin active peptide (FSAP) family. Brevinin subfamily.</text>
</comment>
<organism evidence="4">
    <name type="scientific">Odorrana ishikawae</name>
    <name type="common">Ishikawa's frog</name>
    <name type="synonym">Rana ishikawae</name>
    <dbReference type="NCBI Taxonomy" id="310659"/>
    <lineage>
        <taxon>Eukaryota</taxon>
        <taxon>Metazoa</taxon>
        <taxon>Chordata</taxon>
        <taxon>Craniata</taxon>
        <taxon>Vertebrata</taxon>
        <taxon>Euteleostomi</taxon>
        <taxon>Amphibia</taxon>
        <taxon>Batrachia</taxon>
        <taxon>Anura</taxon>
        <taxon>Neobatrachia</taxon>
        <taxon>Ranoidea</taxon>
        <taxon>Ranidae</taxon>
        <taxon>Odorrana</taxon>
    </lineage>
</organism>
<proteinExistence type="evidence at protein level"/>
<keyword id="KW-0878">Amphibian defense peptide</keyword>
<keyword id="KW-0044">Antibiotic</keyword>
<keyword id="KW-0929">Antimicrobial</keyword>
<keyword id="KW-0165">Cleavage on pair of basic residues</keyword>
<keyword id="KW-0903">Direct protein sequencing</keyword>
<keyword id="KW-1015">Disulfide bond</keyword>
<keyword id="KW-0964">Secreted</keyword>
<keyword id="KW-0732">Signal</keyword>
<protein>
    <recommendedName>
        <fullName evidence="4">Brevinin-2ISc</fullName>
    </recommendedName>
</protein>
<name>BR2C_ODOIS</name>
<sequence>MFTLKKSLLLLFFLGTISLSLCEEERDADEDEGEMTEEEVKRSVLGTVKDLLIGAGKSAAQSVLTTLSCKLSNSC</sequence>
<accession>F1T155</accession>
<reference evidence="6" key="1">
    <citation type="journal article" date="2011" name="Peptides">
        <title>Identification and characterization of antimicrobial peptides from the skin of the endangered frog Odorrana ishikawae.</title>
        <authorList>
            <person name="Iwakoshi-Ukena E."/>
            <person name="Ukena K."/>
            <person name="Okimoto A."/>
            <person name="Soga M."/>
            <person name="Okada G."/>
            <person name="Sano N."/>
            <person name="Fujii T."/>
            <person name="Sugawara Y."/>
            <person name="Sumida M."/>
        </authorList>
    </citation>
    <scope>NUCLEOTIDE SEQUENCE [MRNA]</scope>
    <scope>PROTEIN SEQUENCE OF 43-75</scope>
    <scope>FUNCTION</scope>
    <scope>SYNTHESIS</scope>
    <scope>MASS SPECTROMETRY</scope>
    <source>
        <tissue evidence="4">Skin</tissue>
    </source>
</reference>
<dbReference type="EMBL" id="AB602057">
    <property type="protein sequence ID" value="BAK08587.1"/>
    <property type="molecule type" value="mRNA"/>
</dbReference>
<dbReference type="SMR" id="F1T155"/>
<dbReference type="GO" id="GO:0050829">
    <property type="term" value="P:defense response to Gram-negative bacterium"/>
    <property type="evidence" value="ECO:0000314"/>
    <property type="project" value="UniProtKB"/>
</dbReference>
<dbReference type="GO" id="GO:0050830">
    <property type="term" value="P:defense response to Gram-positive bacterium"/>
    <property type="evidence" value="ECO:0000314"/>
    <property type="project" value="UniProtKB"/>
</dbReference>
<dbReference type="InterPro" id="IPR012521">
    <property type="entry name" value="Antimicrobial_frog_2"/>
</dbReference>
<dbReference type="InterPro" id="IPR004275">
    <property type="entry name" value="Frog_antimicrobial_propeptide"/>
</dbReference>
<dbReference type="Pfam" id="PF08023">
    <property type="entry name" value="Antimicrobial_2"/>
    <property type="match status" value="1"/>
</dbReference>
<dbReference type="Pfam" id="PF03032">
    <property type="entry name" value="FSAP_sig_propep"/>
    <property type="match status" value="1"/>
</dbReference>
<evidence type="ECO:0000250" key="1">
    <source>
        <dbReference type="UniProtKB" id="P80398"/>
    </source>
</evidence>
<evidence type="ECO:0000255" key="2"/>
<evidence type="ECO:0000269" key="3">
    <source>
    </source>
</evidence>
<evidence type="ECO:0000303" key="4">
    <source>
    </source>
</evidence>
<evidence type="ECO:0000305" key="5">
    <source>
    </source>
</evidence>
<evidence type="ECO:0000312" key="6">
    <source>
        <dbReference type="EMBL" id="BAK08587.1"/>
    </source>
</evidence>
<feature type="signal peptide" evidence="2">
    <location>
        <begin position="1"/>
        <end position="22"/>
    </location>
</feature>
<feature type="propeptide" id="PRO_0000439605" description="Removed in mature form" evidence="5">
    <location>
        <begin position="23"/>
        <end position="40"/>
    </location>
</feature>
<feature type="peptide" id="PRO_0000439606" description="Brevinin-2ISc" evidence="3">
    <location>
        <begin position="43"/>
        <end position="75"/>
    </location>
</feature>
<feature type="disulfide bond" evidence="1">
    <location>
        <begin position="69"/>
        <end position="75"/>
    </location>
</feature>